<organism>
    <name type="scientific">Cupriavidus pinatubonensis (strain JMP 134 / LMG 1197)</name>
    <name type="common">Cupriavidus necator (strain JMP 134)</name>
    <dbReference type="NCBI Taxonomy" id="264198"/>
    <lineage>
        <taxon>Bacteria</taxon>
        <taxon>Pseudomonadati</taxon>
        <taxon>Pseudomonadota</taxon>
        <taxon>Betaproteobacteria</taxon>
        <taxon>Burkholderiales</taxon>
        <taxon>Burkholderiaceae</taxon>
        <taxon>Cupriavidus</taxon>
    </lineage>
</organism>
<name>Y4455_CUPPJ</name>
<proteinExistence type="inferred from homology"/>
<gene>
    <name type="ordered locus">Reut_B4455</name>
</gene>
<evidence type="ECO:0000255" key="1">
    <source>
        <dbReference type="HAMAP-Rule" id="MF_01584"/>
    </source>
</evidence>
<protein>
    <recommendedName>
        <fullName evidence="1">UPF0502 protein Reut_B4455</fullName>
    </recommendedName>
</protein>
<dbReference type="EMBL" id="CP000091">
    <property type="protein sequence ID" value="AAZ63805.1"/>
    <property type="molecule type" value="Genomic_DNA"/>
</dbReference>
<dbReference type="SMR" id="Q46SS9"/>
<dbReference type="KEGG" id="reu:Reut_B4455"/>
<dbReference type="eggNOG" id="COG3132">
    <property type="taxonomic scope" value="Bacteria"/>
</dbReference>
<dbReference type="HOGENOM" id="CLU_057831_0_0_4"/>
<dbReference type="OrthoDB" id="9784785at2"/>
<dbReference type="Gene3D" id="1.10.10.10">
    <property type="entry name" value="Winged helix-like DNA-binding domain superfamily/Winged helix DNA-binding domain"/>
    <property type="match status" value="2"/>
</dbReference>
<dbReference type="HAMAP" id="MF_01584">
    <property type="entry name" value="UPF0502"/>
    <property type="match status" value="1"/>
</dbReference>
<dbReference type="InterPro" id="IPR007432">
    <property type="entry name" value="DUF480"/>
</dbReference>
<dbReference type="InterPro" id="IPR036388">
    <property type="entry name" value="WH-like_DNA-bd_sf"/>
</dbReference>
<dbReference type="InterPro" id="IPR036390">
    <property type="entry name" value="WH_DNA-bd_sf"/>
</dbReference>
<dbReference type="PANTHER" id="PTHR38768">
    <property type="entry name" value="UPF0502 PROTEIN YCEH"/>
    <property type="match status" value="1"/>
</dbReference>
<dbReference type="PANTHER" id="PTHR38768:SF1">
    <property type="entry name" value="UPF0502 PROTEIN YCEH"/>
    <property type="match status" value="1"/>
</dbReference>
<dbReference type="Pfam" id="PF04337">
    <property type="entry name" value="DUF480"/>
    <property type="match status" value="1"/>
</dbReference>
<dbReference type="SUPFAM" id="SSF46785">
    <property type="entry name" value="Winged helix' DNA-binding domain"/>
    <property type="match status" value="2"/>
</dbReference>
<reference key="1">
    <citation type="journal article" date="2010" name="PLoS ONE">
        <title>The complete multipartite genome sequence of Cupriavidus necator JMP134, a versatile pollutant degrader.</title>
        <authorList>
            <person name="Lykidis A."/>
            <person name="Perez-Pantoja D."/>
            <person name="Ledger T."/>
            <person name="Mavromatis K."/>
            <person name="Anderson I.J."/>
            <person name="Ivanova N.N."/>
            <person name="Hooper S.D."/>
            <person name="Lapidus A."/>
            <person name="Lucas S."/>
            <person name="Gonzalez B."/>
            <person name="Kyrpides N.C."/>
        </authorList>
    </citation>
    <scope>NUCLEOTIDE SEQUENCE [LARGE SCALE GENOMIC DNA]</scope>
    <source>
        <strain>JMP134 / LMG 1197</strain>
    </source>
</reference>
<sequence>MSSTPDTPSRQPIRALTPIEGRVLGVLKEKQHTVPDTYPLSLNALTAGCNQKTARAPVMNVTEAEVVVAIDGLKGLSLVFEGSSSRVPRFEHNMNRVLGVPSQSAALLAMLLLRGPQTAAELRLNTVRLHAFADISSVEGFLDELAEHEPPYVVKLPRAAGEREHRWMHLLGGEINVDSFAAAGAALADESVAPSELERLRAEQRDLSNRVQRLEALVEHMASQLGIDPDALGA</sequence>
<feature type="chain" id="PRO_0000309413" description="UPF0502 protein Reut_B4455">
    <location>
        <begin position="1"/>
        <end position="234"/>
    </location>
</feature>
<comment type="similarity">
    <text evidence="1">Belongs to the UPF0502 family.</text>
</comment>
<accession>Q46SS9</accession>